<comment type="function">
    <text evidence="2">May be involved in lipid homeostasis.</text>
</comment>
<comment type="subcellular location">
    <subcellularLocation>
        <location evidence="2">Cytoplasm</location>
    </subcellularLocation>
    <subcellularLocation>
        <location evidence="1">Mitochondrion</location>
    </subcellularLocation>
    <subcellularLocation>
        <location evidence="2">Golgi apparatus</location>
    </subcellularLocation>
</comment>
<comment type="similarity">
    <text evidence="3">Belongs to the Tango2 family.</text>
</comment>
<comment type="caution">
    <text evidence="2">Previous published data showed conflicting results on the intracellular location of TANGO2. Has been reported to be located in the Golgi apparatus (By similarity). However, another study was unable to detect Golgi localization (By similarity). Has been reported to be located in the mitochondrion by several recent studies (By similarity). However, no mitochondrial localization was detected in another study which reported that the protein is primarily cytoplasmic (By similarity).</text>
</comment>
<evidence type="ECO:0000250" key="1">
    <source>
        <dbReference type="UniProtKB" id="P54797"/>
    </source>
</evidence>
<evidence type="ECO:0000250" key="2">
    <source>
        <dbReference type="UniProtKB" id="Q6ICL3"/>
    </source>
</evidence>
<evidence type="ECO:0000305" key="3"/>
<reference key="1">
    <citation type="submission" date="2006-02" db="EMBL/GenBank/DDBJ databases">
        <authorList>
            <consortium name="NIH - Mammalian Gene Collection (MGC) project"/>
        </authorList>
    </citation>
    <scope>NUCLEOTIDE SEQUENCE [LARGE SCALE MRNA]</scope>
    <source>
        <strain>Hereford</strain>
        <tissue>Uterus</tissue>
    </source>
</reference>
<proteinExistence type="evidence at transcript level"/>
<protein>
    <recommendedName>
        <fullName>Transport and Golgi organization protein 2 homolog</fullName>
    </recommendedName>
</protein>
<feature type="chain" id="PRO_0000253890" description="Transport and Golgi organization protein 2 homolog">
    <location>
        <begin position="1"/>
        <end position="276"/>
    </location>
</feature>
<accession>Q29RZ5</accession>
<dbReference type="EMBL" id="BC113297">
    <property type="protein sequence ID" value="AAI13298.1"/>
    <property type="molecule type" value="mRNA"/>
</dbReference>
<dbReference type="RefSeq" id="NP_001030405.2">
    <property type="nucleotide sequence ID" value="NM_001035328.2"/>
</dbReference>
<dbReference type="SMR" id="Q29RZ5"/>
<dbReference type="FunCoup" id="Q29RZ5">
    <property type="interactions" value="1398"/>
</dbReference>
<dbReference type="STRING" id="9913.ENSBTAP00000065946"/>
<dbReference type="PaxDb" id="9913-ENSBTAP00000016497"/>
<dbReference type="GeneID" id="518209"/>
<dbReference type="KEGG" id="bta:518209"/>
<dbReference type="CTD" id="128989"/>
<dbReference type="eggNOG" id="KOG2342">
    <property type="taxonomic scope" value="Eukaryota"/>
</dbReference>
<dbReference type="InParanoid" id="Q29RZ5"/>
<dbReference type="OrthoDB" id="191601at2759"/>
<dbReference type="Proteomes" id="UP000009136">
    <property type="component" value="Unplaced"/>
</dbReference>
<dbReference type="GO" id="GO:0005737">
    <property type="term" value="C:cytoplasm"/>
    <property type="evidence" value="ECO:0000250"/>
    <property type="project" value="UniProtKB"/>
</dbReference>
<dbReference type="GO" id="GO:0005829">
    <property type="term" value="C:cytosol"/>
    <property type="evidence" value="ECO:0000250"/>
    <property type="project" value="UniProtKB"/>
</dbReference>
<dbReference type="GO" id="GO:0005794">
    <property type="term" value="C:Golgi apparatus"/>
    <property type="evidence" value="ECO:0000318"/>
    <property type="project" value="GO_Central"/>
</dbReference>
<dbReference type="GO" id="GO:0005739">
    <property type="term" value="C:mitochondrion"/>
    <property type="evidence" value="ECO:0000250"/>
    <property type="project" value="UniProtKB"/>
</dbReference>
<dbReference type="GO" id="GO:0007030">
    <property type="term" value="P:Golgi organization"/>
    <property type="evidence" value="ECO:0000318"/>
    <property type="project" value="GO_Central"/>
</dbReference>
<dbReference type="GO" id="GO:0009306">
    <property type="term" value="P:protein secretion"/>
    <property type="evidence" value="ECO:0000318"/>
    <property type="project" value="GO_Central"/>
</dbReference>
<dbReference type="InterPro" id="IPR008551">
    <property type="entry name" value="TANGO2"/>
</dbReference>
<dbReference type="PANTHER" id="PTHR17985">
    <property type="entry name" value="SER/THR-RICH PROTEIN T10 IN DGCR REGION"/>
    <property type="match status" value="1"/>
</dbReference>
<dbReference type="PANTHER" id="PTHR17985:SF8">
    <property type="entry name" value="TRANSPORT AND GOLGI ORGANIZATION PROTEIN 2 HOMOLOG"/>
    <property type="match status" value="1"/>
</dbReference>
<dbReference type="Pfam" id="PF05742">
    <property type="entry name" value="TANGO2"/>
    <property type="match status" value="1"/>
</dbReference>
<keyword id="KW-0963">Cytoplasm</keyword>
<keyword id="KW-0333">Golgi apparatus</keyword>
<keyword id="KW-0496">Mitochondrion</keyword>
<keyword id="KW-1185">Reference proteome</keyword>
<name>TNG2_BOVIN</name>
<organism>
    <name type="scientific">Bos taurus</name>
    <name type="common">Bovine</name>
    <dbReference type="NCBI Taxonomy" id="9913"/>
    <lineage>
        <taxon>Eukaryota</taxon>
        <taxon>Metazoa</taxon>
        <taxon>Chordata</taxon>
        <taxon>Craniata</taxon>
        <taxon>Vertebrata</taxon>
        <taxon>Euteleostomi</taxon>
        <taxon>Mammalia</taxon>
        <taxon>Eutheria</taxon>
        <taxon>Laurasiatheria</taxon>
        <taxon>Artiodactyla</taxon>
        <taxon>Ruminantia</taxon>
        <taxon>Pecora</taxon>
        <taxon>Bovidae</taxon>
        <taxon>Bovinae</taxon>
        <taxon>Bos</taxon>
    </lineage>
</organism>
<gene>
    <name type="primary">TANGO2</name>
</gene>
<sequence>MCIIFFKFDPRPVSKNAYRLILAANRDEFYHRPARAADFWGSNNEVLSGLDMEEGKEGGTWLGISTRGKLAALTNYLQPRLNRNARGRGELVAQFLTSDMDSLSYLKKVSAEGHLYNGFNLIAADLSAEKGDVICYYGNRGEREPVVLAPGTYGLSNALLETPWRKLCFGKQLFLEAVERGRELPRDALVAQLLAVLSNDEAQLPDPAIEAQGREYVRPILSKYAAVCVRCPDYGTRTSTVILVDADGHVTFTERSMLGSDPTRWETTTHEFRLQS</sequence>